<accession>C0MH17</accession>
<evidence type="ECO:0000255" key="1">
    <source>
        <dbReference type="HAMAP-Rule" id="MF_01347"/>
    </source>
</evidence>
<keyword id="KW-0066">ATP synthesis</keyword>
<keyword id="KW-0067">ATP-binding</keyword>
<keyword id="KW-1003">Cell membrane</keyword>
<keyword id="KW-0139">CF(1)</keyword>
<keyword id="KW-0375">Hydrogen ion transport</keyword>
<keyword id="KW-0406">Ion transport</keyword>
<keyword id="KW-0472">Membrane</keyword>
<keyword id="KW-0547">Nucleotide-binding</keyword>
<keyword id="KW-1278">Translocase</keyword>
<keyword id="KW-0813">Transport</keyword>
<proteinExistence type="inferred from homology"/>
<organism>
    <name type="scientific">Streptococcus equi subsp. zooepidemicus (strain H70)</name>
    <dbReference type="NCBI Taxonomy" id="553483"/>
    <lineage>
        <taxon>Bacteria</taxon>
        <taxon>Bacillati</taxon>
        <taxon>Bacillota</taxon>
        <taxon>Bacilli</taxon>
        <taxon>Lactobacillales</taxon>
        <taxon>Streptococcaceae</taxon>
        <taxon>Streptococcus</taxon>
    </lineage>
</organism>
<gene>
    <name evidence="1" type="primary">atpD</name>
    <name type="ordered locus">SZO_11630</name>
</gene>
<comment type="function">
    <text evidence="1">Produces ATP from ADP in the presence of a proton gradient across the membrane. The catalytic sites are hosted primarily by the beta subunits.</text>
</comment>
<comment type="catalytic activity">
    <reaction evidence="1">
        <text>ATP + H2O + 4 H(+)(in) = ADP + phosphate + 5 H(+)(out)</text>
        <dbReference type="Rhea" id="RHEA:57720"/>
        <dbReference type="ChEBI" id="CHEBI:15377"/>
        <dbReference type="ChEBI" id="CHEBI:15378"/>
        <dbReference type="ChEBI" id="CHEBI:30616"/>
        <dbReference type="ChEBI" id="CHEBI:43474"/>
        <dbReference type="ChEBI" id="CHEBI:456216"/>
        <dbReference type="EC" id="7.1.2.2"/>
    </reaction>
</comment>
<comment type="subunit">
    <text evidence="1">F-type ATPases have 2 components, CF(1) - the catalytic core - and CF(0) - the membrane proton channel. CF(1) has five subunits: alpha(3), beta(3), gamma(1), delta(1), epsilon(1). CF(0) has three main subunits: a(1), b(2) and c(9-12). The alpha and beta chains form an alternating ring which encloses part of the gamma chain. CF(1) is attached to CF(0) by a central stalk formed by the gamma and epsilon chains, while a peripheral stalk is formed by the delta and b chains.</text>
</comment>
<comment type="subcellular location">
    <subcellularLocation>
        <location evidence="1">Cell membrane</location>
        <topology evidence="1">Peripheral membrane protein</topology>
    </subcellularLocation>
</comment>
<comment type="similarity">
    <text evidence="1">Belongs to the ATPase alpha/beta chains family.</text>
</comment>
<protein>
    <recommendedName>
        <fullName evidence="1">ATP synthase subunit beta</fullName>
        <ecNumber evidence="1">7.1.2.2</ecNumber>
    </recommendedName>
    <alternativeName>
        <fullName evidence="1">ATP synthase F1 sector subunit beta</fullName>
    </alternativeName>
    <alternativeName>
        <fullName evidence="1">F-ATPase subunit beta</fullName>
    </alternativeName>
</protein>
<sequence>MSSGKIAQVVGPVVDVVFASGDKLPEINNALIVYKDGDKKQKIVLEVALELGDGMVRTIAMESTDGLTRGLEVLDTGRAISVPVGKETLGRVFNVLGETIDLEAPFADDVNREPIHKKAPAFDELSTSSEILETGIKVIDLLAPYLKGGKVGLFGGAGVGKTVLIQELIHNIAQEHGGISVFTGVGERTREGNDLYWEMKESGVIEKTAMVFGQMNEPPGARMRVALTGLTIAEYFRDVEGQDVLLFIDNIFRFTQAGSEVSALLGRMPSAVGYQPTLATEMGQLQERITSTKKGSVTSIQAIYVPADDYTDPAPATAFAHLDSTTNLERKLTQMGIYPAVDPLASSSRALSPEIVGEEHYAVATEVQRVLQRYRELQDIIAILGMDELSEEEKTLVGRARRIQFFLSQNFNVAEQFTGLPGSYVPVAETVRGFKEILEGKHDHLPEDAFRAVGPIEDVIEKAKKMGF</sequence>
<reference key="1">
    <citation type="journal article" date="2009" name="PLoS Pathog.">
        <title>Genomic evidence for the evolution of Streptococcus equi: host restriction, increased virulence, and genetic exchange with human pathogens.</title>
        <authorList>
            <person name="Holden M.T.G."/>
            <person name="Heather Z."/>
            <person name="Paillot R."/>
            <person name="Steward K.F."/>
            <person name="Webb K."/>
            <person name="Ainslie F."/>
            <person name="Jourdan T."/>
            <person name="Bason N.C."/>
            <person name="Holroyd N.E."/>
            <person name="Mungall K."/>
            <person name="Quail M.A."/>
            <person name="Sanders M."/>
            <person name="Simmonds M."/>
            <person name="Willey D."/>
            <person name="Brooks K."/>
            <person name="Aanensen D.M."/>
            <person name="Spratt B.G."/>
            <person name="Jolley K.A."/>
            <person name="Maiden M.C.J."/>
            <person name="Kehoe M."/>
            <person name="Chanter N."/>
            <person name="Bentley S.D."/>
            <person name="Robinson C."/>
            <person name="Maskell D.J."/>
            <person name="Parkhill J."/>
            <person name="Waller A.S."/>
        </authorList>
    </citation>
    <scope>NUCLEOTIDE SEQUENCE [LARGE SCALE GENOMIC DNA]</scope>
    <source>
        <strain>H70</strain>
    </source>
</reference>
<dbReference type="EC" id="7.1.2.2" evidence="1"/>
<dbReference type="EMBL" id="FM204884">
    <property type="protein sequence ID" value="CAW99601.1"/>
    <property type="molecule type" value="Genomic_DNA"/>
</dbReference>
<dbReference type="SMR" id="C0MH17"/>
<dbReference type="KEGG" id="seq:SZO_11630"/>
<dbReference type="eggNOG" id="COG0055">
    <property type="taxonomic scope" value="Bacteria"/>
</dbReference>
<dbReference type="HOGENOM" id="CLU_022398_0_2_9"/>
<dbReference type="Proteomes" id="UP000001368">
    <property type="component" value="Chromosome"/>
</dbReference>
<dbReference type="GO" id="GO:0005886">
    <property type="term" value="C:plasma membrane"/>
    <property type="evidence" value="ECO:0007669"/>
    <property type="project" value="UniProtKB-SubCell"/>
</dbReference>
<dbReference type="GO" id="GO:0045259">
    <property type="term" value="C:proton-transporting ATP synthase complex"/>
    <property type="evidence" value="ECO:0007669"/>
    <property type="project" value="UniProtKB-KW"/>
</dbReference>
<dbReference type="GO" id="GO:0005524">
    <property type="term" value="F:ATP binding"/>
    <property type="evidence" value="ECO:0007669"/>
    <property type="project" value="UniProtKB-UniRule"/>
</dbReference>
<dbReference type="GO" id="GO:0016887">
    <property type="term" value="F:ATP hydrolysis activity"/>
    <property type="evidence" value="ECO:0007669"/>
    <property type="project" value="InterPro"/>
</dbReference>
<dbReference type="GO" id="GO:0046933">
    <property type="term" value="F:proton-transporting ATP synthase activity, rotational mechanism"/>
    <property type="evidence" value="ECO:0007669"/>
    <property type="project" value="UniProtKB-UniRule"/>
</dbReference>
<dbReference type="CDD" id="cd18110">
    <property type="entry name" value="ATP-synt_F1_beta_C"/>
    <property type="match status" value="1"/>
</dbReference>
<dbReference type="CDD" id="cd18115">
    <property type="entry name" value="ATP-synt_F1_beta_N"/>
    <property type="match status" value="1"/>
</dbReference>
<dbReference type="CDD" id="cd01133">
    <property type="entry name" value="F1-ATPase_beta_CD"/>
    <property type="match status" value="1"/>
</dbReference>
<dbReference type="FunFam" id="1.10.1140.10:FF:000001">
    <property type="entry name" value="ATP synthase subunit beta"/>
    <property type="match status" value="1"/>
</dbReference>
<dbReference type="FunFam" id="2.40.10.170:FF:000005">
    <property type="entry name" value="ATP synthase subunit beta"/>
    <property type="match status" value="1"/>
</dbReference>
<dbReference type="FunFam" id="3.40.50.300:FF:000004">
    <property type="entry name" value="ATP synthase subunit beta"/>
    <property type="match status" value="1"/>
</dbReference>
<dbReference type="Gene3D" id="2.40.10.170">
    <property type="match status" value="1"/>
</dbReference>
<dbReference type="Gene3D" id="1.10.1140.10">
    <property type="entry name" value="Bovine Mitochondrial F1-atpase, Atp Synthase Beta Chain, Chain D, domain 3"/>
    <property type="match status" value="1"/>
</dbReference>
<dbReference type="Gene3D" id="3.40.50.300">
    <property type="entry name" value="P-loop containing nucleotide triphosphate hydrolases"/>
    <property type="match status" value="1"/>
</dbReference>
<dbReference type="HAMAP" id="MF_01347">
    <property type="entry name" value="ATP_synth_beta_bact"/>
    <property type="match status" value="1"/>
</dbReference>
<dbReference type="InterPro" id="IPR003593">
    <property type="entry name" value="AAA+_ATPase"/>
</dbReference>
<dbReference type="InterPro" id="IPR055190">
    <property type="entry name" value="ATP-synt_VA_C"/>
</dbReference>
<dbReference type="InterPro" id="IPR005722">
    <property type="entry name" value="ATP_synth_F1_bsu"/>
</dbReference>
<dbReference type="InterPro" id="IPR020003">
    <property type="entry name" value="ATPase_a/bsu_AS"/>
</dbReference>
<dbReference type="InterPro" id="IPR050053">
    <property type="entry name" value="ATPase_alpha/beta_chains"/>
</dbReference>
<dbReference type="InterPro" id="IPR004100">
    <property type="entry name" value="ATPase_F1/V1/A1_a/bsu_N"/>
</dbReference>
<dbReference type="InterPro" id="IPR036121">
    <property type="entry name" value="ATPase_F1/V1/A1_a/bsu_N_sf"/>
</dbReference>
<dbReference type="InterPro" id="IPR000194">
    <property type="entry name" value="ATPase_F1/V1/A1_a/bsu_nucl-bd"/>
</dbReference>
<dbReference type="InterPro" id="IPR024034">
    <property type="entry name" value="ATPase_F1/V1_b/a_C"/>
</dbReference>
<dbReference type="InterPro" id="IPR027417">
    <property type="entry name" value="P-loop_NTPase"/>
</dbReference>
<dbReference type="NCBIfam" id="TIGR01039">
    <property type="entry name" value="atpD"/>
    <property type="match status" value="1"/>
</dbReference>
<dbReference type="PANTHER" id="PTHR15184">
    <property type="entry name" value="ATP SYNTHASE"/>
    <property type="match status" value="1"/>
</dbReference>
<dbReference type="PANTHER" id="PTHR15184:SF71">
    <property type="entry name" value="ATP SYNTHASE SUBUNIT BETA, MITOCHONDRIAL"/>
    <property type="match status" value="1"/>
</dbReference>
<dbReference type="Pfam" id="PF00006">
    <property type="entry name" value="ATP-synt_ab"/>
    <property type="match status" value="1"/>
</dbReference>
<dbReference type="Pfam" id="PF02874">
    <property type="entry name" value="ATP-synt_ab_N"/>
    <property type="match status" value="1"/>
</dbReference>
<dbReference type="Pfam" id="PF22919">
    <property type="entry name" value="ATP-synt_VA_C"/>
    <property type="match status" value="1"/>
</dbReference>
<dbReference type="SMART" id="SM00382">
    <property type="entry name" value="AAA"/>
    <property type="match status" value="1"/>
</dbReference>
<dbReference type="SUPFAM" id="SSF47917">
    <property type="entry name" value="C-terminal domain of alpha and beta subunits of F1 ATP synthase"/>
    <property type="match status" value="1"/>
</dbReference>
<dbReference type="SUPFAM" id="SSF50615">
    <property type="entry name" value="N-terminal domain of alpha and beta subunits of F1 ATP synthase"/>
    <property type="match status" value="1"/>
</dbReference>
<dbReference type="SUPFAM" id="SSF52540">
    <property type="entry name" value="P-loop containing nucleoside triphosphate hydrolases"/>
    <property type="match status" value="1"/>
</dbReference>
<dbReference type="PROSITE" id="PS00152">
    <property type="entry name" value="ATPASE_ALPHA_BETA"/>
    <property type="match status" value="1"/>
</dbReference>
<feature type="chain" id="PRO_1000214834" description="ATP synthase subunit beta">
    <location>
        <begin position="1"/>
        <end position="468"/>
    </location>
</feature>
<feature type="binding site" evidence="1">
    <location>
        <begin position="155"/>
        <end position="162"/>
    </location>
    <ligand>
        <name>ATP</name>
        <dbReference type="ChEBI" id="CHEBI:30616"/>
    </ligand>
</feature>
<name>ATPB_STRS7</name>